<organism>
    <name type="scientific">Yersinia pestis bv. Antiqua (strain Nepal516)</name>
    <dbReference type="NCBI Taxonomy" id="377628"/>
    <lineage>
        <taxon>Bacteria</taxon>
        <taxon>Pseudomonadati</taxon>
        <taxon>Pseudomonadota</taxon>
        <taxon>Gammaproteobacteria</taxon>
        <taxon>Enterobacterales</taxon>
        <taxon>Yersiniaceae</taxon>
        <taxon>Yersinia</taxon>
    </lineage>
</organism>
<feature type="chain" id="PRO_0000264336" description="Protein-glutamate methylesterase/protein-glutamine glutaminase">
    <location>
        <begin position="1"/>
        <end position="349"/>
    </location>
</feature>
<feature type="domain" description="Response regulatory" evidence="1">
    <location>
        <begin position="5"/>
        <end position="122"/>
    </location>
</feature>
<feature type="domain" description="CheB-type methylesterase" evidence="1">
    <location>
        <begin position="152"/>
        <end position="344"/>
    </location>
</feature>
<feature type="active site" evidence="1">
    <location>
        <position position="164"/>
    </location>
</feature>
<feature type="active site" evidence="1">
    <location>
        <position position="190"/>
    </location>
</feature>
<feature type="active site" evidence="1">
    <location>
        <position position="286"/>
    </location>
</feature>
<feature type="modified residue" description="4-aspartylphosphate" evidence="1">
    <location>
        <position position="56"/>
    </location>
</feature>
<gene>
    <name evidence="1" type="primary">cheB</name>
    <name type="ordered locus">YPN_1952</name>
    <name type="ORF">YP516_2174</name>
</gene>
<proteinExistence type="inferred from homology"/>
<name>CHEB_YERPN</name>
<keyword id="KW-0145">Chemotaxis</keyword>
<keyword id="KW-0963">Cytoplasm</keyword>
<keyword id="KW-0378">Hydrolase</keyword>
<keyword id="KW-0597">Phosphoprotein</keyword>
<evidence type="ECO:0000255" key="1">
    <source>
        <dbReference type="HAMAP-Rule" id="MF_00099"/>
    </source>
</evidence>
<sequence>MSKIRVLCVDDSALMRQLMTEIINSHPDMEMVAAAQDPLVARDLIKKFNPQVLTLDVEMPRMDGLDFLEKLMRLRPMPVVMVSSLTGKNSEITMRALELGAIDFVTKPQLGIREGMLAYSELIADKIRTAAKARLPQRVLENKPAMLSHTPLLSSEKLIAIGASTGGTEAIRAVLQPLPPTSPALLITQHMPPGFTRSFAERLNKLCQITVKEAEDGERVLPGHAYIAPGDRHLELARSGANYQVRIHDGPAVNRHRPSVDVLFRSVAQYAGRNAVGVILTGMGNDGAAGLLEMHRAGAYTLAQNEASCVVFGMPREAIAMGGVNDVVELNQISQRMLAQISSGQALRI</sequence>
<dbReference type="EC" id="3.1.1.61" evidence="1"/>
<dbReference type="EC" id="3.5.1.44" evidence="1"/>
<dbReference type="EMBL" id="CP000305">
    <property type="protein sequence ID" value="ABG18281.1"/>
    <property type="molecule type" value="Genomic_DNA"/>
</dbReference>
<dbReference type="EMBL" id="ACNQ01000011">
    <property type="protein sequence ID" value="EEO76577.1"/>
    <property type="molecule type" value="Genomic_DNA"/>
</dbReference>
<dbReference type="RefSeq" id="WP_002210874.1">
    <property type="nucleotide sequence ID" value="NZ_ACNQ01000011.1"/>
</dbReference>
<dbReference type="SMR" id="Q1CI99"/>
<dbReference type="KEGG" id="ypn:YPN_1952"/>
<dbReference type="HOGENOM" id="CLU_000445_51_0_6"/>
<dbReference type="Proteomes" id="UP000008936">
    <property type="component" value="Chromosome"/>
</dbReference>
<dbReference type="GO" id="GO:0005737">
    <property type="term" value="C:cytoplasm"/>
    <property type="evidence" value="ECO:0007669"/>
    <property type="project" value="UniProtKB-SubCell"/>
</dbReference>
<dbReference type="GO" id="GO:0000156">
    <property type="term" value="F:phosphorelay response regulator activity"/>
    <property type="evidence" value="ECO:0007669"/>
    <property type="project" value="InterPro"/>
</dbReference>
<dbReference type="GO" id="GO:0008984">
    <property type="term" value="F:protein-glutamate methylesterase activity"/>
    <property type="evidence" value="ECO:0007669"/>
    <property type="project" value="UniProtKB-UniRule"/>
</dbReference>
<dbReference type="GO" id="GO:0050568">
    <property type="term" value="F:protein-glutamine glutaminase activity"/>
    <property type="evidence" value="ECO:0007669"/>
    <property type="project" value="UniProtKB-UniRule"/>
</dbReference>
<dbReference type="GO" id="GO:0006935">
    <property type="term" value="P:chemotaxis"/>
    <property type="evidence" value="ECO:0007669"/>
    <property type="project" value="UniProtKB-UniRule"/>
</dbReference>
<dbReference type="CDD" id="cd16432">
    <property type="entry name" value="CheB_Rec"/>
    <property type="match status" value="1"/>
</dbReference>
<dbReference type="CDD" id="cd17541">
    <property type="entry name" value="REC_CheB-like"/>
    <property type="match status" value="1"/>
</dbReference>
<dbReference type="FunFam" id="3.40.50.180:FF:000001">
    <property type="entry name" value="Protein-glutamate methylesterase/protein-glutamine glutaminase"/>
    <property type="match status" value="1"/>
</dbReference>
<dbReference type="FunFam" id="3.40.50.2300:FF:000060">
    <property type="entry name" value="Protein-glutamate methylesterase/protein-glutamine glutaminase"/>
    <property type="match status" value="1"/>
</dbReference>
<dbReference type="Gene3D" id="3.40.50.2300">
    <property type="match status" value="1"/>
</dbReference>
<dbReference type="Gene3D" id="3.40.50.180">
    <property type="entry name" value="Methylesterase CheB, C-terminal domain"/>
    <property type="match status" value="1"/>
</dbReference>
<dbReference type="HAMAP" id="MF_00099">
    <property type="entry name" value="CheB_chemtxs"/>
    <property type="match status" value="1"/>
</dbReference>
<dbReference type="InterPro" id="IPR008248">
    <property type="entry name" value="CheB-like"/>
</dbReference>
<dbReference type="InterPro" id="IPR035909">
    <property type="entry name" value="CheB_C"/>
</dbReference>
<dbReference type="InterPro" id="IPR011006">
    <property type="entry name" value="CheY-like_superfamily"/>
</dbReference>
<dbReference type="InterPro" id="IPR000673">
    <property type="entry name" value="Sig_transdc_resp-reg_Me-estase"/>
</dbReference>
<dbReference type="InterPro" id="IPR001789">
    <property type="entry name" value="Sig_transdc_resp-reg_receiver"/>
</dbReference>
<dbReference type="NCBIfam" id="NF001965">
    <property type="entry name" value="PRK00742.1"/>
    <property type="match status" value="1"/>
</dbReference>
<dbReference type="NCBIfam" id="NF009206">
    <property type="entry name" value="PRK12555.1"/>
    <property type="match status" value="1"/>
</dbReference>
<dbReference type="PANTHER" id="PTHR42872">
    <property type="entry name" value="PROTEIN-GLUTAMATE METHYLESTERASE/PROTEIN-GLUTAMINE GLUTAMINASE"/>
    <property type="match status" value="1"/>
</dbReference>
<dbReference type="PANTHER" id="PTHR42872:SF6">
    <property type="entry name" value="PROTEIN-GLUTAMATE METHYLESTERASE_PROTEIN-GLUTAMINE GLUTAMINASE"/>
    <property type="match status" value="1"/>
</dbReference>
<dbReference type="Pfam" id="PF01339">
    <property type="entry name" value="CheB_methylest"/>
    <property type="match status" value="1"/>
</dbReference>
<dbReference type="Pfam" id="PF00072">
    <property type="entry name" value="Response_reg"/>
    <property type="match status" value="1"/>
</dbReference>
<dbReference type="PIRSF" id="PIRSF000876">
    <property type="entry name" value="RR_chemtxs_CheB"/>
    <property type="match status" value="1"/>
</dbReference>
<dbReference type="SMART" id="SM00448">
    <property type="entry name" value="REC"/>
    <property type="match status" value="1"/>
</dbReference>
<dbReference type="SUPFAM" id="SSF52172">
    <property type="entry name" value="CheY-like"/>
    <property type="match status" value="1"/>
</dbReference>
<dbReference type="SUPFAM" id="SSF52738">
    <property type="entry name" value="Methylesterase CheB, C-terminal domain"/>
    <property type="match status" value="1"/>
</dbReference>
<dbReference type="PROSITE" id="PS50122">
    <property type="entry name" value="CHEB"/>
    <property type="match status" value="1"/>
</dbReference>
<dbReference type="PROSITE" id="PS50110">
    <property type="entry name" value="RESPONSE_REGULATORY"/>
    <property type="match status" value="1"/>
</dbReference>
<reference key="1">
    <citation type="journal article" date="2006" name="J. Bacteriol.">
        <title>Complete genome sequence of Yersinia pestis strains Antiqua and Nepal516: evidence of gene reduction in an emerging pathogen.</title>
        <authorList>
            <person name="Chain P.S.G."/>
            <person name="Hu P."/>
            <person name="Malfatti S.A."/>
            <person name="Radnedge L."/>
            <person name="Larimer F."/>
            <person name="Vergez L.M."/>
            <person name="Worsham P."/>
            <person name="Chu M.C."/>
            <person name="Andersen G.L."/>
        </authorList>
    </citation>
    <scope>NUCLEOTIDE SEQUENCE [LARGE SCALE GENOMIC DNA]</scope>
    <source>
        <strain>Nepal516</strain>
    </source>
</reference>
<reference key="2">
    <citation type="submission" date="2009-04" db="EMBL/GenBank/DDBJ databases">
        <title>Yersinia pestis Nepal516A whole genome shotgun sequencing project.</title>
        <authorList>
            <person name="Plunkett G. III"/>
            <person name="Anderson B.D."/>
            <person name="Baumler D.J."/>
            <person name="Burland V."/>
            <person name="Cabot E.L."/>
            <person name="Glasner J.D."/>
            <person name="Mau B."/>
            <person name="Neeno-Eckwall E."/>
            <person name="Perna N.T."/>
            <person name="Munk A.C."/>
            <person name="Tapia R."/>
            <person name="Green L.D."/>
            <person name="Rogers Y.C."/>
            <person name="Detter J.C."/>
            <person name="Bruce D.C."/>
            <person name="Brettin T.S."/>
        </authorList>
    </citation>
    <scope>NUCLEOTIDE SEQUENCE [LARGE SCALE GENOMIC DNA]</scope>
    <source>
        <strain>Nepal516</strain>
    </source>
</reference>
<accession>Q1CI99</accession>
<accession>C4GTR3</accession>
<protein>
    <recommendedName>
        <fullName evidence="1">Protein-glutamate methylesterase/protein-glutamine glutaminase</fullName>
        <ecNumber evidence="1">3.1.1.61</ecNumber>
        <ecNumber evidence="1">3.5.1.44</ecNumber>
    </recommendedName>
</protein>
<comment type="function">
    <text evidence="1">Involved in chemotaxis. Part of a chemotaxis signal transduction system that modulates chemotaxis in response to various stimuli. Catalyzes the demethylation of specific methylglutamate residues introduced into the chemoreceptors (methyl-accepting chemotaxis proteins or MCP) by CheR. Also mediates the irreversible deamidation of specific glutamine residues to glutamic acid.</text>
</comment>
<comment type="catalytic activity">
    <reaction evidence="1">
        <text>[protein]-L-glutamate 5-O-methyl ester + H2O = L-glutamyl-[protein] + methanol + H(+)</text>
        <dbReference type="Rhea" id="RHEA:23236"/>
        <dbReference type="Rhea" id="RHEA-COMP:10208"/>
        <dbReference type="Rhea" id="RHEA-COMP:10311"/>
        <dbReference type="ChEBI" id="CHEBI:15377"/>
        <dbReference type="ChEBI" id="CHEBI:15378"/>
        <dbReference type="ChEBI" id="CHEBI:17790"/>
        <dbReference type="ChEBI" id="CHEBI:29973"/>
        <dbReference type="ChEBI" id="CHEBI:82795"/>
        <dbReference type="EC" id="3.1.1.61"/>
    </reaction>
</comment>
<comment type="catalytic activity">
    <reaction evidence="1">
        <text>L-glutaminyl-[protein] + H2O = L-glutamyl-[protein] + NH4(+)</text>
        <dbReference type="Rhea" id="RHEA:16441"/>
        <dbReference type="Rhea" id="RHEA-COMP:10207"/>
        <dbReference type="Rhea" id="RHEA-COMP:10208"/>
        <dbReference type="ChEBI" id="CHEBI:15377"/>
        <dbReference type="ChEBI" id="CHEBI:28938"/>
        <dbReference type="ChEBI" id="CHEBI:29973"/>
        <dbReference type="ChEBI" id="CHEBI:30011"/>
        <dbReference type="EC" id="3.5.1.44"/>
    </reaction>
</comment>
<comment type="subcellular location">
    <subcellularLocation>
        <location evidence="1">Cytoplasm</location>
    </subcellularLocation>
</comment>
<comment type="domain">
    <text evidence="1">Contains a C-terminal catalytic domain, and an N-terminal region which modulates catalytic activity.</text>
</comment>
<comment type="PTM">
    <text evidence="1">Phosphorylated by CheA. Phosphorylation of the N-terminal regulatory domain activates the methylesterase activity.</text>
</comment>
<comment type="similarity">
    <text evidence="1">Belongs to the CheB family.</text>
</comment>